<organism>
    <name type="scientific">Lactococcus lactis subsp. lactis (strain IL1403)</name>
    <name type="common">Streptococcus lactis</name>
    <dbReference type="NCBI Taxonomy" id="272623"/>
    <lineage>
        <taxon>Bacteria</taxon>
        <taxon>Bacillati</taxon>
        <taxon>Bacillota</taxon>
        <taxon>Bacilli</taxon>
        <taxon>Lactobacillales</taxon>
        <taxon>Streptococcaceae</taxon>
        <taxon>Lactococcus</taxon>
    </lineage>
</organism>
<gene>
    <name type="primary">rnr1</name>
    <name type="synonym">vacB1</name>
    <name type="ordered locus">LL0942</name>
    <name type="ORF">L0323</name>
</gene>
<evidence type="ECO:0000250" key="1"/>
<evidence type="ECO:0000255" key="2"/>
<evidence type="ECO:0000256" key="3">
    <source>
        <dbReference type="SAM" id="MobiDB-lite"/>
    </source>
</evidence>
<evidence type="ECO:0000305" key="4"/>
<protein>
    <recommendedName>
        <fullName>Ribonuclease R 1</fullName>
        <shortName>RNase R 1</shortName>
        <ecNumber>3.1.13.1</ecNumber>
    </recommendedName>
    <alternativeName>
        <fullName>VacB protein homolog 1</fullName>
    </alternativeName>
</protein>
<sequence>MSIREVIMDYLENSSKKALSVEELSVALHMNKAKDYKVFVKTLASLEAEHLLNFTAKGKVELAEKEEAKVVISGIFRANAAGFGFVSIDAEEPDVFVARGQTAFALDGDEVFIEIDKNANALKGTSAEGHVVEIIRHDVHQVVGTFVALNDDEKEQTGLIGFVKSRNKKIPYRVYLENEGLIPENKAIVRVEITHYPDKEFPQTMQGLVTEIIGQADDQGIDVLEVLASMDIVSEFPKEVLDQAEAVPEEVPENEIVGRVDYRNEITFTIDGADAKDLDDAVHAKRLENGNYELGVHIADVSHYVTENSPLDKEAYERGTSVYVTDRVVPMLPERLSNGICSLNPRINRLTQSCVMEISPEGRVINYQISQSIIKTTERMTYDAVNQMIAGDEAALENYAKIADSVKIMVELHHILEAMRKRRGAIDFDTVEAKIIVNEKGLPIEIRKRTRGIAERMIESFMLEANETVATHFEAHGLPFIYRIHEQPKADRLQRFIDFAATFGMQIEGTSNGIDQKVLQAFMKKIKGQPGEMVLSTMLLRSMQQARYSENNEGHFGLAAENYTHFTSPIRRYPDLLVHRLIREIGEGKTPANILQKWEDKIPEIAEHSSHRERRAVDAEREVEKMKKAEFMEEHVGEEYEGIIASVTRFGMFIELENTIEGLVHISTLKGDYFNYQERMLALIGERSGLTFKIGQPIKIKVVKADRMTGEIDFEYLPSELDLIDKAAKAKKKPDHKGRKKSNQSLKVKSVAPKSTDKSANKSKNGRRADEKFEFDKKKKKSAKKPFYSKAAKGKFTDKKDNGKKFTDGRKKPHKRG</sequence>
<proteinExistence type="inferred from homology"/>
<keyword id="KW-0963">Cytoplasm</keyword>
<keyword id="KW-0269">Exonuclease</keyword>
<keyword id="KW-0378">Hydrolase</keyword>
<keyword id="KW-0540">Nuclease</keyword>
<keyword id="KW-1185">Reference proteome</keyword>
<keyword id="KW-0694">RNA-binding</keyword>
<comment type="function">
    <text evidence="1">3'-5' exoribonuclease that releases 5'-nucleoside monophosphates and is involved in maturation of structured RNAs.</text>
</comment>
<comment type="catalytic activity">
    <reaction>
        <text>Exonucleolytic cleavage in the 3'- to 5'-direction to yield nucleoside 5'-phosphates.</text>
        <dbReference type="EC" id="3.1.13.1"/>
    </reaction>
</comment>
<comment type="subcellular location">
    <subcellularLocation>
        <location evidence="4">Cytoplasm</location>
    </subcellularLocation>
</comment>
<comment type="similarity">
    <text evidence="4">Belongs to the RNR ribonuclease family. RNase R subfamily.</text>
</comment>
<dbReference type="EC" id="3.1.13.1"/>
<dbReference type="EMBL" id="AE005176">
    <property type="protein sequence ID" value="AAK05040.1"/>
    <property type="molecule type" value="Genomic_DNA"/>
</dbReference>
<dbReference type="PIR" id="F86742">
    <property type="entry name" value="F86742"/>
</dbReference>
<dbReference type="RefSeq" id="NP_267098.1">
    <property type="nucleotide sequence ID" value="NC_002662.1"/>
</dbReference>
<dbReference type="SMR" id="Q9CH00"/>
<dbReference type="PaxDb" id="272623-L0323"/>
<dbReference type="EnsemblBacteria" id="AAK05040">
    <property type="protein sequence ID" value="AAK05040"/>
    <property type="gene ID" value="L0323"/>
</dbReference>
<dbReference type="KEGG" id="lla:L0323"/>
<dbReference type="PATRIC" id="fig|272623.7.peg.1008"/>
<dbReference type="eggNOG" id="COG0557">
    <property type="taxonomic scope" value="Bacteria"/>
</dbReference>
<dbReference type="HOGENOM" id="CLU_002333_4_1_9"/>
<dbReference type="OrthoDB" id="9764149at2"/>
<dbReference type="Proteomes" id="UP000002196">
    <property type="component" value="Chromosome"/>
</dbReference>
<dbReference type="GO" id="GO:0005829">
    <property type="term" value="C:cytosol"/>
    <property type="evidence" value="ECO:0007669"/>
    <property type="project" value="TreeGrafter"/>
</dbReference>
<dbReference type="GO" id="GO:0008859">
    <property type="term" value="F:exoribonuclease II activity"/>
    <property type="evidence" value="ECO:0007669"/>
    <property type="project" value="UniProtKB-UniRule"/>
</dbReference>
<dbReference type="GO" id="GO:0003723">
    <property type="term" value="F:RNA binding"/>
    <property type="evidence" value="ECO:0007669"/>
    <property type="project" value="UniProtKB-UniRule"/>
</dbReference>
<dbReference type="GO" id="GO:0006402">
    <property type="term" value="P:mRNA catabolic process"/>
    <property type="evidence" value="ECO:0007669"/>
    <property type="project" value="TreeGrafter"/>
</dbReference>
<dbReference type="CDD" id="cd04471">
    <property type="entry name" value="S1_RNase_R"/>
    <property type="match status" value="1"/>
</dbReference>
<dbReference type="Gene3D" id="2.40.50.140">
    <property type="entry name" value="Nucleic acid-binding proteins"/>
    <property type="match status" value="2"/>
</dbReference>
<dbReference type="HAMAP" id="MF_01895">
    <property type="entry name" value="RNase_R"/>
    <property type="match status" value="1"/>
</dbReference>
<dbReference type="InterPro" id="IPR040476">
    <property type="entry name" value="CSD2"/>
</dbReference>
<dbReference type="InterPro" id="IPR012340">
    <property type="entry name" value="NA-bd_OB-fold"/>
</dbReference>
<dbReference type="InterPro" id="IPR013223">
    <property type="entry name" value="RNase_B_OB_dom"/>
</dbReference>
<dbReference type="InterPro" id="IPR001900">
    <property type="entry name" value="RNase_II/R"/>
</dbReference>
<dbReference type="InterPro" id="IPR022966">
    <property type="entry name" value="RNase_II/R_CS"/>
</dbReference>
<dbReference type="InterPro" id="IPR004476">
    <property type="entry name" value="RNase_II/RNase_R"/>
</dbReference>
<dbReference type="InterPro" id="IPR011805">
    <property type="entry name" value="RNase_R"/>
</dbReference>
<dbReference type="InterPro" id="IPR050180">
    <property type="entry name" value="RNR_Ribonuclease"/>
</dbReference>
<dbReference type="InterPro" id="IPR003029">
    <property type="entry name" value="S1_domain"/>
</dbReference>
<dbReference type="NCBIfam" id="TIGR00358">
    <property type="entry name" value="3_prime_RNase"/>
    <property type="match status" value="1"/>
</dbReference>
<dbReference type="NCBIfam" id="TIGR02063">
    <property type="entry name" value="RNase_R"/>
    <property type="match status" value="1"/>
</dbReference>
<dbReference type="PANTHER" id="PTHR23355:SF9">
    <property type="entry name" value="DIS3-LIKE EXONUCLEASE 2"/>
    <property type="match status" value="1"/>
</dbReference>
<dbReference type="PANTHER" id="PTHR23355">
    <property type="entry name" value="RIBONUCLEASE"/>
    <property type="match status" value="1"/>
</dbReference>
<dbReference type="Pfam" id="PF17876">
    <property type="entry name" value="CSD2"/>
    <property type="match status" value="1"/>
</dbReference>
<dbReference type="Pfam" id="PF08206">
    <property type="entry name" value="OB_RNB"/>
    <property type="match status" value="1"/>
</dbReference>
<dbReference type="Pfam" id="PF00773">
    <property type="entry name" value="RNB"/>
    <property type="match status" value="1"/>
</dbReference>
<dbReference type="Pfam" id="PF00575">
    <property type="entry name" value="S1"/>
    <property type="match status" value="1"/>
</dbReference>
<dbReference type="SMART" id="SM00955">
    <property type="entry name" value="RNB"/>
    <property type="match status" value="1"/>
</dbReference>
<dbReference type="SMART" id="SM00316">
    <property type="entry name" value="S1"/>
    <property type="match status" value="1"/>
</dbReference>
<dbReference type="SUPFAM" id="SSF50249">
    <property type="entry name" value="Nucleic acid-binding proteins"/>
    <property type="match status" value="4"/>
</dbReference>
<dbReference type="PROSITE" id="PS01175">
    <property type="entry name" value="RIBONUCLEASE_II"/>
    <property type="match status" value="1"/>
</dbReference>
<dbReference type="PROSITE" id="PS50126">
    <property type="entry name" value="S1"/>
    <property type="match status" value="1"/>
</dbReference>
<reference key="1">
    <citation type="journal article" date="2001" name="Genome Res.">
        <title>The complete genome sequence of the lactic acid bacterium Lactococcus lactis ssp. lactis IL1403.</title>
        <authorList>
            <person name="Bolotin A."/>
            <person name="Wincker P."/>
            <person name="Mauger S."/>
            <person name="Jaillon O."/>
            <person name="Malarme K."/>
            <person name="Weissenbach J."/>
            <person name="Ehrlich S.D."/>
            <person name="Sorokin A."/>
        </authorList>
    </citation>
    <scope>NUCLEOTIDE SEQUENCE [LARGE SCALE GENOMIC DNA]</scope>
    <source>
        <strain>IL1403</strain>
    </source>
</reference>
<feature type="chain" id="PRO_0000166406" description="Ribonuclease R 1">
    <location>
        <begin position="1"/>
        <end position="817"/>
    </location>
</feature>
<feature type="domain" description="RNB" evidence="2">
    <location>
        <begin position="259"/>
        <end position="584"/>
    </location>
</feature>
<feature type="domain" description="S1 motif">
    <location>
        <begin position="637"/>
        <end position="717"/>
    </location>
</feature>
<feature type="region of interest" description="Disordered" evidence="3">
    <location>
        <begin position="728"/>
        <end position="817"/>
    </location>
</feature>
<feature type="compositionally biased region" description="Basic residues" evidence="3">
    <location>
        <begin position="729"/>
        <end position="742"/>
    </location>
</feature>
<feature type="compositionally biased region" description="Basic and acidic residues" evidence="3">
    <location>
        <begin position="767"/>
        <end position="777"/>
    </location>
</feature>
<feature type="compositionally biased region" description="Basic and acidic residues" evidence="3">
    <location>
        <begin position="795"/>
        <end position="810"/>
    </location>
</feature>
<name>RNR1_LACLA</name>
<accession>Q9CH00</accession>